<gene>
    <name evidence="1" type="primary">trpA</name>
    <name type="ordered locus">Rfer_1787</name>
</gene>
<feature type="chain" id="PRO_1000018267" description="Tryptophan synthase alpha chain">
    <location>
        <begin position="1"/>
        <end position="273"/>
    </location>
</feature>
<feature type="active site" description="Proton acceptor" evidence="1">
    <location>
        <position position="49"/>
    </location>
</feature>
<feature type="active site" description="Proton acceptor" evidence="1">
    <location>
        <position position="60"/>
    </location>
</feature>
<comment type="function">
    <text evidence="1">The alpha subunit is responsible for the aldol cleavage of indoleglycerol phosphate to indole and glyceraldehyde 3-phosphate.</text>
</comment>
<comment type="catalytic activity">
    <reaction evidence="1">
        <text>(1S,2R)-1-C-(indol-3-yl)glycerol 3-phosphate + L-serine = D-glyceraldehyde 3-phosphate + L-tryptophan + H2O</text>
        <dbReference type="Rhea" id="RHEA:10532"/>
        <dbReference type="ChEBI" id="CHEBI:15377"/>
        <dbReference type="ChEBI" id="CHEBI:33384"/>
        <dbReference type="ChEBI" id="CHEBI:57912"/>
        <dbReference type="ChEBI" id="CHEBI:58866"/>
        <dbReference type="ChEBI" id="CHEBI:59776"/>
        <dbReference type="EC" id="4.2.1.20"/>
    </reaction>
</comment>
<comment type="pathway">
    <text evidence="1">Amino-acid biosynthesis; L-tryptophan biosynthesis; L-tryptophan from chorismate: step 5/5.</text>
</comment>
<comment type="subunit">
    <text evidence="1">Tetramer of two alpha and two beta chains.</text>
</comment>
<comment type="similarity">
    <text evidence="1">Belongs to the TrpA family.</text>
</comment>
<sequence>MSRIARTFAGLKAQGRKALIPYVTAGFPFPDITPELMHAFVAGGADVIELGVPFSDPSADGPVIQKAGDKALAAGIGMVQVLDMVRTFRTRDASTPVVLMGYANPVERYNQKHDRHDGKSAFVLDAAAAGVDGVLIVDYPPEECEAFAAELKSAGLDLIFLLAPTSTDERMQQVARVASGYVYYVSLKGVTGSGALDTGAVEAMLPRIRAHVQVPVGVGFGIRDAATARTIGQVADAVVIGSKIIQLIDEQPRDQVGPVAQKFLCEIRTALDN</sequence>
<organism>
    <name type="scientific">Albidiferax ferrireducens (strain ATCC BAA-621 / DSM 15236 / T118)</name>
    <name type="common">Rhodoferax ferrireducens</name>
    <dbReference type="NCBI Taxonomy" id="338969"/>
    <lineage>
        <taxon>Bacteria</taxon>
        <taxon>Pseudomonadati</taxon>
        <taxon>Pseudomonadota</taxon>
        <taxon>Betaproteobacteria</taxon>
        <taxon>Burkholderiales</taxon>
        <taxon>Comamonadaceae</taxon>
        <taxon>Rhodoferax</taxon>
    </lineage>
</organism>
<keyword id="KW-0028">Amino-acid biosynthesis</keyword>
<keyword id="KW-0057">Aromatic amino acid biosynthesis</keyword>
<keyword id="KW-0456">Lyase</keyword>
<keyword id="KW-1185">Reference proteome</keyword>
<keyword id="KW-0822">Tryptophan biosynthesis</keyword>
<evidence type="ECO:0000255" key="1">
    <source>
        <dbReference type="HAMAP-Rule" id="MF_00131"/>
    </source>
</evidence>
<protein>
    <recommendedName>
        <fullName evidence="1">Tryptophan synthase alpha chain</fullName>
        <ecNumber evidence="1">4.2.1.20</ecNumber>
    </recommendedName>
</protein>
<proteinExistence type="inferred from homology"/>
<reference key="1">
    <citation type="submission" date="2006-02" db="EMBL/GenBank/DDBJ databases">
        <title>Complete sequence of chromosome of Rhodoferax ferrireducens DSM 15236.</title>
        <authorList>
            <person name="Copeland A."/>
            <person name="Lucas S."/>
            <person name="Lapidus A."/>
            <person name="Barry K."/>
            <person name="Detter J.C."/>
            <person name="Glavina del Rio T."/>
            <person name="Hammon N."/>
            <person name="Israni S."/>
            <person name="Pitluck S."/>
            <person name="Brettin T."/>
            <person name="Bruce D."/>
            <person name="Han C."/>
            <person name="Tapia R."/>
            <person name="Gilna P."/>
            <person name="Kiss H."/>
            <person name="Schmutz J."/>
            <person name="Larimer F."/>
            <person name="Land M."/>
            <person name="Kyrpides N."/>
            <person name="Ivanova N."/>
            <person name="Richardson P."/>
        </authorList>
    </citation>
    <scope>NUCLEOTIDE SEQUENCE [LARGE SCALE GENOMIC DNA]</scope>
    <source>
        <strain>ATCC BAA-621 / DSM 15236 / T118</strain>
    </source>
</reference>
<accession>Q21XI7</accession>
<name>TRPA_ALBFT</name>
<dbReference type="EC" id="4.2.1.20" evidence="1"/>
<dbReference type="EMBL" id="CP000267">
    <property type="protein sequence ID" value="ABD69516.1"/>
    <property type="molecule type" value="Genomic_DNA"/>
</dbReference>
<dbReference type="RefSeq" id="WP_011464084.1">
    <property type="nucleotide sequence ID" value="NC_007908.1"/>
</dbReference>
<dbReference type="SMR" id="Q21XI7"/>
<dbReference type="STRING" id="338969.Rfer_1787"/>
<dbReference type="KEGG" id="rfr:Rfer_1787"/>
<dbReference type="eggNOG" id="COG0159">
    <property type="taxonomic scope" value="Bacteria"/>
</dbReference>
<dbReference type="HOGENOM" id="CLU_016734_0_0_4"/>
<dbReference type="OrthoDB" id="9804578at2"/>
<dbReference type="UniPathway" id="UPA00035">
    <property type="reaction ID" value="UER00044"/>
</dbReference>
<dbReference type="Proteomes" id="UP000008332">
    <property type="component" value="Chromosome"/>
</dbReference>
<dbReference type="GO" id="GO:0005829">
    <property type="term" value="C:cytosol"/>
    <property type="evidence" value="ECO:0007669"/>
    <property type="project" value="TreeGrafter"/>
</dbReference>
<dbReference type="GO" id="GO:0004834">
    <property type="term" value="F:tryptophan synthase activity"/>
    <property type="evidence" value="ECO:0007669"/>
    <property type="project" value="UniProtKB-UniRule"/>
</dbReference>
<dbReference type="CDD" id="cd04724">
    <property type="entry name" value="Tryptophan_synthase_alpha"/>
    <property type="match status" value="1"/>
</dbReference>
<dbReference type="FunFam" id="3.20.20.70:FF:000037">
    <property type="entry name" value="Tryptophan synthase alpha chain"/>
    <property type="match status" value="1"/>
</dbReference>
<dbReference type="Gene3D" id="3.20.20.70">
    <property type="entry name" value="Aldolase class I"/>
    <property type="match status" value="1"/>
</dbReference>
<dbReference type="HAMAP" id="MF_00131">
    <property type="entry name" value="Trp_synth_alpha"/>
    <property type="match status" value="1"/>
</dbReference>
<dbReference type="InterPro" id="IPR013785">
    <property type="entry name" value="Aldolase_TIM"/>
</dbReference>
<dbReference type="InterPro" id="IPR011060">
    <property type="entry name" value="RibuloseP-bd_barrel"/>
</dbReference>
<dbReference type="InterPro" id="IPR002028">
    <property type="entry name" value="Trp_synthase_suA"/>
</dbReference>
<dbReference type="NCBIfam" id="TIGR00262">
    <property type="entry name" value="trpA"/>
    <property type="match status" value="1"/>
</dbReference>
<dbReference type="PANTHER" id="PTHR43406:SF1">
    <property type="entry name" value="TRYPTOPHAN SYNTHASE ALPHA CHAIN, CHLOROPLASTIC"/>
    <property type="match status" value="1"/>
</dbReference>
<dbReference type="PANTHER" id="PTHR43406">
    <property type="entry name" value="TRYPTOPHAN SYNTHASE, ALPHA CHAIN"/>
    <property type="match status" value="1"/>
</dbReference>
<dbReference type="Pfam" id="PF00290">
    <property type="entry name" value="Trp_syntA"/>
    <property type="match status" value="1"/>
</dbReference>
<dbReference type="SUPFAM" id="SSF51366">
    <property type="entry name" value="Ribulose-phoshate binding barrel"/>
    <property type="match status" value="1"/>
</dbReference>